<name>FBK37_ARATH</name>
<feature type="chain" id="PRO_0000283197" description="Putative F-box/kelch-repeat protein At2g29780">
    <location>
        <begin position="1"/>
        <end position="398"/>
    </location>
</feature>
<feature type="domain" description="F-box">
    <location>
        <begin position="43"/>
        <end position="90"/>
    </location>
</feature>
<feature type="repeat" description="Kelch 1">
    <location>
        <begin position="148"/>
        <end position="195"/>
    </location>
</feature>
<feature type="repeat" description="Kelch 2">
    <location>
        <begin position="196"/>
        <end position="241"/>
    </location>
</feature>
<feature type="repeat" description="Kelch 3">
    <location>
        <begin position="243"/>
        <end position="289"/>
    </location>
</feature>
<feature type="repeat" description="Kelch 4">
    <location>
        <begin position="295"/>
        <end position="342"/>
    </location>
</feature>
<feature type="region of interest" description="Disordered" evidence="1">
    <location>
        <begin position="1"/>
        <end position="46"/>
    </location>
</feature>
<feature type="compositionally biased region" description="Basic and acidic residues" evidence="1">
    <location>
        <begin position="19"/>
        <end position="32"/>
    </location>
</feature>
<gene>
    <name type="ordered locus">At2g29780</name>
    <name type="ORF">T27A16.12</name>
</gene>
<reference key="1">
    <citation type="journal article" date="1999" name="Nature">
        <title>Sequence and analysis of chromosome 2 of the plant Arabidopsis thaliana.</title>
        <authorList>
            <person name="Lin X."/>
            <person name="Kaul S."/>
            <person name="Rounsley S.D."/>
            <person name="Shea T.P."/>
            <person name="Benito M.-I."/>
            <person name="Town C.D."/>
            <person name="Fujii C.Y."/>
            <person name="Mason T.M."/>
            <person name="Bowman C.L."/>
            <person name="Barnstead M.E."/>
            <person name="Feldblyum T.V."/>
            <person name="Buell C.R."/>
            <person name="Ketchum K.A."/>
            <person name="Lee J.J."/>
            <person name="Ronning C.M."/>
            <person name="Koo H.L."/>
            <person name="Moffat K.S."/>
            <person name="Cronin L.A."/>
            <person name="Shen M."/>
            <person name="Pai G."/>
            <person name="Van Aken S."/>
            <person name="Umayam L."/>
            <person name="Tallon L.J."/>
            <person name="Gill J.E."/>
            <person name="Adams M.D."/>
            <person name="Carrera A.J."/>
            <person name="Creasy T.H."/>
            <person name="Goodman H.M."/>
            <person name="Somerville C.R."/>
            <person name="Copenhaver G.P."/>
            <person name="Preuss D."/>
            <person name="Nierman W.C."/>
            <person name="White O."/>
            <person name="Eisen J.A."/>
            <person name="Salzberg S.L."/>
            <person name="Fraser C.M."/>
            <person name="Venter J.C."/>
        </authorList>
    </citation>
    <scope>NUCLEOTIDE SEQUENCE [LARGE SCALE GENOMIC DNA]</scope>
    <source>
        <strain>cv. Columbia</strain>
    </source>
</reference>
<reference key="2">
    <citation type="journal article" date="2017" name="Plant J.">
        <title>Araport11: a complete reannotation of the Arabidopsis thaliana reference genome.</title>
        <authorList>
            <person name="Cheng C.Y."/>
            <person name="Krishnakumar V."/>
            <person name="Chan A.P."/>
            <person name="Thibaud-Nissen F."/>
            <person name="Schobel S."/>
            <person name="Town C.D."/>
        </authorList>
    </citation>
    <scope>GENOME REANNOTATION</scope>
    <source>
        <strain>cv. Columbia</strain>
    </source>
</reference>
<accession>O82378</accession>
<keyword id="KW-0025">Alternative splicing</keyword>
<keyword id="KW-0880">Kelch repeat</keyword>
<keyword id="KW-1185">Reference proteome</keyword>
<keyword id="KW-0677">Repeat</keyword>
<sequence>MAIISETSDDGSHGGVPNKKPEELHKNPKEDDHQEEEVENHPPIPRQIPQALIRRTVALIKRCHYPSLSLLSKAFRIVISSPELHQTRSSLNLTEPVLYALIGFPPHSFPNWFILNHNITRNIPLRLSAIGSLPPMNPGSAVVTIGYKMYVIGGLIGPNNPVKTVFVIDCRVHTCNYLPTMHRARYRAVAEVINGKIYVIGGCEKRYDDWIEVFDVVTGIWSTVPDRSHFMSSLPGGGFVTSVVMQNKIYILDATCGLVYDPIDGTWESGELGTTLKSYWYKPCCVIEDLLYSFDPYCLQGSPINVYDPNVMVWTPMMGTGIRAFPDLDYFECKMANFGGKLMVFGATYNNPVTDTWCIEMALIKGETGPILGMIDSMVPVLRSVYSPYIDLCRSVTF</sequence>
<evidence type="ECO:0000256" key="1">
    <source>
        <dbReference type="SAM" id="MobiDB-lite"/>
    </source>
</evidence>
<comment type="alternative products">
    <event type="alternative splicing"/>
    <isoform>
        <id>O82378-1</id>
        <name>1</name>
        <sequence type="displayed"/>
    </isoform>
    <text>A number of isoforms are produced. According to EST sequences.</text>
</comment>
<organism>
    <name type="scientific">Arabidopsis thaliana</name>
    <name type="common">Mouse-ear cress</name>
    <dbReference type="NCBI Taxonomy" id="3702"/>
    <lineage>
        <taxon>Eukaryota</taxon>
        <taxon>Viridiplantae</taxon>
        <taxon>Streptophyta</taxon>
        <taxon>Embryophyta</taxon>
        <taxon>Tracheophyta</taxon>
        <taxon>Spermatophyta</taxon>
        <taxon>Magnoliopsida</taxon>
        <taxon>eudicotyledons</taxon>
        <taxon>Gunneridae</taxon>
        <taxon>Pentapetalae</taxon>
        <taxon>rosids</taxon>
        <taxon>malvids</taxon>
        <taxon>Brassicales</taxon>
        <taxon>Brassicaceae</taxon>
        <taxon>Camelineae</taxon>
        <taxon>Arabidopsis</taxon>
    </lineage>
</organism>
<proteinExistence type="predicted"/>
<protein>
    <recommendedName>
        <fullName>Putative F-box/kelch-repeat protein At2g29780</fullName>
    </recommendedName>
</protein>
<dbReference type="EMBL" id="AC005496">
    <property type="protein sequence ID" value="AAC35223.1"/>
    <property type="molecule type" value="Genomic_DNA"/>
</dbReference>
<dbReference type="EMBL" id="CP002685">
    <property type="protein sequence ID" value="AEC08303.1"/>
    <property type="molecule type" value="Genomic_DNA"/>
</dbReference>
<dbReference type="PIR" id="E84700">
    <property type="entry name" value="E84700"/>
</dbReference>
<dbReference type="RefSeq" id="NP_180539.1">
    <molecule id="O82378-1"/>
    <property type="nucleotide sequence ID" value="NM_128532.2"/>
</dbReference>
<dbReference type="SMR" id="O82378"/>
<dbReference type="PaxDb" id="3702-AT2G29780.1"/>
<dbReference type="ProteomicsDB" id="230918">
    <molecule id="O82378-1"/>
</dbReference>
<dbReference type="EnsemblPlants" id="AT2G29780.1">
    <molecule id="O82378-1"/>
    <property type="protein sequence ID" value="AT2G29780.1"/>
    <property type="gene ID" value="AT2G29780"/>
</dbReference>
<dbReference type="GeneID" id="817528"/>
<dbReference type="Gramene" id="AT2G29780.1">
    <molecule id="O82378-1"/>
    <property type="protein sequence ID" value="AT2G29780.1"/>
    <property type="gene ID" value="AT2G29780"/>
</dbReference>
<dbReference type="KEGG" id="ath:AT2G29780"/>
<dbReference type="Araport" id="AT2G29780"/>
<dbReference type="TAIR" id="AT2G29780"/>
<dbReference type="eggNOG" id="KOG1072">
    <property type="taxonomic scope" value="Eukaryota"/>
</dbReference>
<dbReference type="HOGENOM" id="CLU_032521_1_2_1"/>
<dbReference type="InParanoid" id="O82378"/>
<dbReference type="OMA" id="FECKMAN"/>
<dbReference type="OrthoDB" id="45365at2759"/>
<dbReference type="PhylomeDB" id="O82378"/>
<dbReference type="PRO" id="PR:O82378"/>
<dbReference type="Proteomes" id="UP000006548">
    <property type="component" value="Chromosome 2"/>
</dbReference>
<dbReference type="ExpressionAtlas" id="O82378">
    <property type="expression patterns" value="baseline and differential"/>
</dbReference>
<dbReference type="Gene3D" id="2.120.10.80">
    <property type="entry name" value="Kelch-type beta propeller"/>
    <property type="match status" value="1"/>
</dbReference>
<dbReference type="InterPro" id="IPR050354">
    <property type="entry name" value="F-box/kelch-repeat_ARATH"/>
</dbReference>
<dbReference type="InterPro" id="IPR015915">
    <property type="entry name" value="Kelch-typ_b-propeller"/>
</dbReference>
<dbReference type="InterPro" id="IPR006652">
    <property type="entry name" value="Kelch_1"/>
</dbReference>
<dbReference type="PANTHER" id="PTHR24414:SF65">
    <property type="entry name" value="F-BOX DOMAIN-CONTAINING PROTEIN"/>
    <property type="match status" value="1"/>
</dbReference>
<dbReference type="PANTHER" id="PTHR24414">
    <property type="entry name" value="F-BOX/KELCH-REPEAT PROTEIN SKIP4"/>
    <property type="match status" value="1"/>
</dbReference>
<dbReference type="Pfam" id="PF25210">
    <property type="entry name" value="Kelch_FKB95"/>
    <property type="match status" value="1"/>
</dbReference>
<dbReference type="SMART" id="SM00612">
    <property type="entry name" value="Kelch"/>
    <property type="match status" value="2"/>
</dbReference>
<dbReference type="SUPFAM" id="SSF117281">
    <property type="entry name" value="Kelch motif"/>
    <property type="match status" value="1"/>
</dbReference>